<protein>
    <recommendedName>
        <fullName evidence="1">Adenylyl-sulfate kinase</fullName>
        <ecNumber evidence="1">2.7.1.25</ecNumber>
    </recommendedName>
    <alternativeName>
        <fullName evidence="1">APS kinase</fullName>
    </alternativeName>
    <alternativeName>
        <fullName evidence="1">ATP adenosine-5'-phosphosulfate 3'-phosphotransferase</fullName>
    </alternativeName>
    <alternativeName>
        <fullName evidence="1">Adenosine-5'-phosphosulfate kinase</fullName>
    </alternativeName>
</protein>
<reference key="1">
    <citation type="journal article" date="2008" name="Genome Res.">
        <title>Comparative genome analysis of Salmonella enteritidis PT4 and Salmonella gallinarum 287/91 provides insights into evolutionary and host adaptation pathways.</title>
        <authorList>
            <person name="Thomson N.R."/>
            <person name="Clayton D.J."/>
            <person name="Windhorst D."/>
            <person name="Vernikos G."/>
            <person name="Davidson S."/>
            <person name="Churcher C."/>
            <person name="Quail M.A."/>
            <person name="Stevens M."/>
            <person name="Jones M.A."/>
            <person name="Watson M."/>
            <person name="Barron A."/>
            <person name="Layton A."/>
            <person name="Pickard D."/>
            <person name="Kingsley R.A."/>
            <person name="Bignell A."/>
            <person name="Clark L."/>
            <person name="Harris B."/>
            <person name="Ormond D."/>
            <person name="Abdellah Z."/>
            <person name="Brooks K."/>
            <person name="Cherevach I."/>
            <person name="Chillingworth T."/>
            <person name="Woodward J."/>
            <person name="Norberczak H."/>
            <person name="Lord A."/>
            <person name="Arrowsmith C."/>
            <person name="Jagels K."/>
            <person name="Moule S."/>
            <person name="Mungall K."/>
            <person name="Saunders M."/>
            <person name="Whitehead S."/>
            <person name="Chabalgoity J.A."/>
            <person name="Maskell D."/>
            <person name="Humphreys T."/>
            <person name="Roberts M."/>
            <person name="Barrow P.A."/>
            <person name="Dougan G."/>
            <person name="Parkhill J."/>
        </authorList>
    </citation>
    <scope>NUCLEOTIDE SEQUENCE [LARGE SCALE GENOMIC DNA]</scope>
    <source>
        <strain>287/91 / NCTC 13346</strain>
    </source>
</reference>
<keyword id="KW-0067">ATP-binding</keyword>
<keyword id="KW-0418">Kinase</keyword>
<keyword id="KW-0547">Nucleotide-binding</keyword>
<keyword id="KW-0597">Phosphoprotein</keyword>
<keyword id="KW-0808">Transferase</keyword>
<organism>
    <name type="scientific">Salmonella gallinarum (strain 287/91 / NCTC 13346)</name>
    <dbReference type="NCBI Taxonomy" id="550538"/>
    <lineage>
        <taxon>Bacteria</taxon>
        <taxon>Pseudomonadati</taxon>
        <taxon>Pseudomonadota</taxon>
        <taxon>Gammaproteobacteria</taxon>
        <taxon>Enterobacterales</taxon>
        <taxon>Enterobacteriaceae</taxon>
        <taxon>Salmonella</taxon>
    </lineage>
</organism>
<evidence type="ECO:0000255" key="1">
    <source>
        <dbReference type="HAMAP-Rule" id="MF_00065"/>
    </source>
</evidence>
<name>CYSC_SALG2</name>
<accession>B5RDQ6</accession>
<gene>
    <name evidence="1" type="primary">cysC</name>
    <name type="ordered locus">SG2836</name>
</gene>
<proteinExistence type="inferred from homology"/>
<dbReference type="EC" id="2.7.1.25" evidence="1"/>
<dbReference type="EMBL" id="AM933173">
    <property type="protein sequence ID" value="CAR38644.1"/>
    <property type="molecule type" value="Genomic_DNA"/>
</dbReference>
<dbReference type="RefSeq" id="WP_001173665.1">
    <property type="nucleotide sequence ID" value="NC_011274.1"/>
</dbReference>
<dbReference type="SMR" id="B5RDQ6"/>
<dbReference type="KEGG" id="seg:SG2836"/>
<dbReference type="HOGENOM" id="CLU_046932_1_0_6"/>
<dbReference type="UniPathway" id="UPA00140">
    <property type="reaction ID" value="UER00205"/>
</dbReference>
<dbReference type="Proteomes" id="UP000008321">
    <property type="component" value="Chromosome"/>
</dbReference>
<dbReference type="GO" id="GO:0004020">
    <property type="term" value="F:adenylylsulfate kinase activity"/>
    <property type="evidence" value="ECO:0007669"/>
    <property type="project" value="UniProtKB-UniRule"/>
</dbReference>
<dbReference type="GO" id="GO:0005524">
    <property type="term" value="F:ATP binding"/>
    <property type="evidence" value="ECO:0007669"/>
    <property type="project" value="UniProtKB-UniRule"/>
</dbReference>
<dbReference type="GO" id="GO:0070814">
    <property type="term" value="P:hydrogen sulfide biosynthetic process"/>
    <property type="evidence" value="ECO:0007669"/>
    <property type="project" value="UniProtKB-UniRule"/>
</dbReference>
<dbReference type="GO" id="GO:0000103">
    <property type="term" value="P:sulfate assimilation"/>
    <property type="evidence" value="ECO:0007669"/>
    <property type="project" value="UniProtKB-UniRule"/>
</dbReference>
<dbReference type="CDD" id="cd02027">
    <property type="entry name" value="APSK"/>
    <property type="match status" value="1"/>
</dbReference>
<dbReference type="FunFam" id="3.40.50.300:FF:000212">
    <property type="entry name" value="Adenylyl-sulfate kinase"/>
    <property type="match status" value="1"/>
</dbReference>
<dbReference type="Gene3D" id="3.40.50.300">
    <property type="entry name" value="P-loop containing nucleotide triphosphate hydrolases"/>
    <property type="match status" value="1"/>
</dbReference>
<dbReference type="HAMAP" id="MF_00065">
    <property type="entry name" value="Adenylyl_sulf_kinase"/>
    <property type="match status" value="1"/>
</dbReference>
<dbReference type="InterPro" id="IPR002891">
    <property type="entry name" value="APS_kinase"/>
</dbReference>
<dbReference type="InterPro" id="IPR027417">
    <property type="entry name" value="P-loop_NTPase"/>
</dbReference>
<dbReference type="NCBIfam" id="TIGR00455">
    <property type="entry name" value="apsK"/>
    <property type="match status" value="1"/>
</dbReference>
<dbReference type="NCBIfam" id="NF003013">
    <property type="entry name" value="PRK03846.1"/>
    <property type="match status" value="1"/>
</dbReference>
<dbReference type="PANTHER" id="PTHR11055:SF63">
    <property type="entry name" value="ADENYLYL-SULFATE KINASE 1, CHLOROPLASTIC"/>
    <property type="match status" value="1"/>
</dbReference>
<dbReference type="PANTHER" id="PTHR11055">
    <property type="entry name" value="BIFUNCTIONAL 3'-PHOSPHOADENOSINE 5'-PHOSPHOSULFATE SYNTHASE"/>
    <property type="match status" value="1"/>
</dbReference>
<dbReference type="Pfam" id="PF01583">
    <property type="entry name" value="APS_kinase"/>
    <property type="match status" value="1"/>
</dbReference>
<dbReference type="SUPFAM" id="SSF52540">
    <property type="entry name" value="P-loop containing nucleoside triphosphate hydrolases"/>
    <property type="match status" value="1"/>
</dbReference>
<comment type="function">
    <text evidence="1">Catalyzes the synthesis of activated sulfate.</text>
</comment>
<comment type="catalytic activity">
    <reaction evidence="1">
        <text>adenosine 5'-phosphosulfate + ATP = 3'-phosphoadenylyl sulfate + ADP + H(+)</text>
        <dbReference type="Rhea" id="RHEA:24152"/>
        <dbReference type="ChEBI" id="CHEBI:15378"/>
        <dbReference type="ChEBI" id="CHEBI:30616"/>
        <dbReference type="ChEBI" id="CHEBI:58243"/>
        <dbReference type="ChEBI" id="CHEBI:58339"/>
        <dbReference type="ChEBI" id="CHEBI:456216"/>
        <dbReference type="EC" id="2.7.1.25"/>
    </reaction>
</comment>
<comment type="pathway">
    <text evidence="1">Sulfur metabolism; hydrogen sulfide biosynthesis; sulfite from sulfate: step 2/3.</text>
</comment>
<comment type="similarity">
    <text evidence="1">Belongs to the APS kinase family.</text>
</comment>
<feature type="chain" id="PRO_1000092247" description="Adenylyl-sulfate kinase">
    <location>
        <begin position="1"/>
        <end position="201"/>
    </location>
</feature>
<feature type="active site" description="Phosphoserine intermediate" evidence="1">
    <location>
        <position position="109"/>
    </location>
</feature>
<feature type="binding site" evidence="1">
    <location>
        <begin position="35"/>
        <end position="42"/>
    </location>
    <ligand>
        <name>ATP</name>
        <dbReference type="ChEBI" id="CHEBI:30616"/>
    </ligand>
</feature>
<sequence>MALHDENVVWHSHPVTVAAREQLHGHRGVVLWFTGLSGSGKSTVAGALEEALHQRGVSTYLLDGDNVRYGLCRDLGFSDADRQENIRRVGEVASLMADAGLIVLTAFISPHRAERQLVKERVGHDRFIEIYVNTPLAICEQRDPKGLYKKARAGELRNFTGIDAIYEAPDSPQVHLNGEQLVTNLVSQLLDLLRRRDIIRS</sequence>